<feature type="chain" id="PRO_1000077626" description="NH(3)-dependent NAD(+) synthetase">
    <location>
        <begin position="1"/>
        <end position="274"/>
    </location>
</feature>
<feature type="binding site" evidence="1">
    <location>
        <begin position="46"/>
        <end position="53"/>
    </location>
    <ligand>
        <name>ATP</name>
        <dbReference type="ChEBI" id="CHEBI:30616"/>
    </ligand>
</feature>
<feature type="binding site" evidence="1">
    <location>
        <position position="52"/>
    </location>
    <ligand>
        <name>Mg(2+)</name>
        <dbReference type="ChEBI" id="CHEBI:18420"/>
    </ligand>
</feature>
<feature type="binding site" evidence="1">
    <location>
        <position position="140"/>
    </location>
    <ligand>
        <name>deamido-NAD(+)</name>
        <dbReference type="ChEBI" id="CHEBI:58437"/>
    </ligand>
</feature>
<feature type="binding site" evidence="1">
    <location>
        <position position="160"/>
    </location>
    <ligand>
        <name>ATP</name>
        <dbReference type="ChEBI" id="CHEBI:30616"/>
    </ligand>
</feature>
<feature type="binding site" evidence="1">
    <location>
        <position position="165"/>
    </location>
    <ligand>
        <name>Mg(2+)</name>
        <dbReference type="ChEBI" id="CHEBI:18420"/>
    </ligand>
</feature>
<feature type="binding site" evidence="1">
    <location>
        <position position="173"/>
    </location>
    <ligand>
        <name>deamido-NAD(+)</name>
        <dbReference type="ChEBI" id="CHEBI:58437"/>
    </ligand>
</feature>
<feature type="binding site" evidence="1">
    <location>
        <position position="180"/>
    </location>
    <ligand>
        <name>deamido-NAD(+)</name>
        <dbReference type="ChEBI" id="CHEBI:58437"/>
    </ligand>
</feature>
<feature type="binding site" evidence="1">
    <location>
        <position position="189"/>
    </location>
    <ligand>
        <name>ATP</name>
        <dbReference type="ChEBI" id="CHEBI:30616"/>
    </ligand>
</feature>
<feature type="binding site" evidence="1">
    <location>
        <position position="211"/>
    </location>
    <ligand>
        <name>ATP</name>
        <dbReference type="ChEBI" id="CHEBI:30616"/>
    </ligand>
</feature>
<feature type="binding site" evidence="1">
    <location>
        <begin position="260"/>
        <end position="261"/>
    </location>
    <ligand>
        <name>deamido-NAD(+)</name>
        <dbReference type="ChEBI" id="CHEBI:58437"/>
    </ligand>
</feature>
<name>NADE_STRPD</name>
<keyword id="KW-0067">ATP-binding</keyword>
<keyword id="KW-0436">Ligase</keyword>
<keyword id="KW-0460">Magnesium</keyword>
<keyword id="KW-0479">Metal-binding</keyword>
<keyword id="KW-0520">NAD</keyword>
<keyword id="KW-0547">Nucleotide-binding</keyword>
<reference key="1">
    <citation type="journal article" date="2006" name="Proc. Natl. Acad. Sci. U.S.A.">
        <title>Molecular genetic anatomy of inter- and intraserotype variation in the human bacterial pathogen group A Streptococcus.</title>
        <authorList>
            <person name="Beres S.B."/>
            <person name="Richter E.W."/>
            <person name="Nagiec M.J."/>
            <person name="Sumby P."/>
            <person name="Porcella S.F."/>
            <person name="DeLeo F.R."/>
            <person name="Musser J.M."/>
        </authorList>
    </citation>
    <scope>NUCLEOTIDE SEQUENCE [LARGE SCALE GENOMIC DNA]</scope>
    <source>
        <strain>MGAS10270</strain>
    </source>
</reference>
<protein>
    <recommendedName>
        <fullName evidence="1">NH(3)-dependent NAD(+) synthetase</fullName>
        <ecNumber evidence="1">6.3.1.5</ecNumber>
    </recommendedName>
</protein>
<accession>Q1JFM0</accession>
<gene>
    <name evidence="1" type="primary">nadE</name>
    <name type="ordered locus">MGAS10270_Spy1474</name>
</gene>
<proteinExistence type="inferred from homology"/>
<organism>
    <name type="scientific">Streptococcus pyogenes serotype M2 (strain MGAS10270)</name>
    <dbReference type="NCBI Taxonomy" id="370552"/>
    <lineage>
        <taxon>Bacteria</taxon>
        <taxon>Bacillati</taxon>
        <taxon>Bacillota</taxon>
        <taxon>Bacilli</taxon>
        <taxon>Lactobacillales</taxon>
        <taxon>Streptococcaceae</taxon>
        <taxon>Streptococcus</taxon>
    </lineage>
</organism>
<evidence type="ECO:0000255" key="1">
    <source>
        <dbReference type="HAMAP-Rule" id="MF_00193"/>
    </source>
</evidence>
<dbReference type="EC" id="6.3.1.5" evidence="1"/>
<dbReference type="EMBL" id="CP000260">
    <property type="protein sequence ID" value="ABF34539.1"/>
    <property type="molecule type" value="Genomic_DNA"/>
</dbReference>
<dbReference type="SMR" id="Q1JFM0"/>
<dbReference type="KEGG" id="sph:MGAS10270_Spy1474"/>
<dbReference type="HOGENOM" id="CLU_059327_3_0_9"/>
<dbReference type="UniPathway" id="UPA00253">
    <property type="reaction ID" value="UER00333"/>
</dbReference>
<dbReference type="Proteomes" id="UP000002436">
    <property type="component" value="Chromosome"/>
</dbReference>
<dbReference type="GO" id="GO:0005737">
    <property type="term" value="C:cytoplasm"/>
    <property type="evidence" value="ECO:0007669"/>
    <property type="project" value="InterPro"/>
</dbReference>
<dbReference type="GO" id="GO:0005524">
    <property type="term" value="F:ATP binding"/>
    <property type="evidence" value="ECO:0007669"/>
    <property type="project" value="UniProtKB-UniRule"/>
</dbReference>
<dbReference type="GO" id="GO:0004359">
    <property type="term" value="F:glutaminase activity"/>
    <property type="evidence" value="ECO:0007669"/>
    <property type="project" value="InterPro"/>
</dbReference>
<dbReference type="GO" id="GO:0046872">
    <property type="term" value="F:metal ion binding"/>
    <property type="evidence" value="ECO:0007669"/>
    <property type="project" value="UniProtKB-KW"/>
</dbReference>
<dbReference type="GO" id="GO:0003952">
    <property type="term" value="F:NAD+ synthase (glutamine-hydrolyzing) activity"/>
    <property type="evidence" value="ECO:0007669"/>
    <property type="project" value="InterPro"/>
</dbReference>
<dbReference type="GO" id="GO:0008795">
    <property type="term" value="F:NAD+ synthase activity"/>
    <property type="evidence" value="ECO:0007669"/>
    <property type="project" value="UniProtKB-UniRule"/>
</dbReference>
<dbReference type="GO" id="GO:0009435">
    <property type="term" value="P:NAD biosynthetic process"/>
    <property type="evidence" value="ECO:0007669"/>
    <property type="project" value="UniProtKB-UniRule"/>
</dbReference>
<dbReference type="CDD" id="cd00553">
    <property type="entry name" value="NAD_synthase"/>
    <property type="match status" value="1"/>
</dbReference>
<dbReference type="FunFam" id="3.40.50.620:FF:000015">
    <property type="entry name" value="NH(3)-dependent NAD(+) synthetase"/>
    <property type="match status" value="1"/>
</dbReference>
<dbReference type="Gene3D" id="3.40.50.620">
    <property type="entry name" value="HUPs"/>
    <property type="match status" value="1"/>
</dbReference>
<dbReference type="HAMAP" id="MF_00193">
    <property type="entry name" value="NadE_ammonia_dep"/>
    <property type="match status" value="1"/>
</dbReference>
<dbReference type="InterPro" id="IPR022310">
    <property type="entry name" value="NAD/GMP_synthase"/>
</dbReference>
<dbReference type="InterPro" id="IPR003694">
    <property type="entry name" value="NAD_synthase"/>
</dbReference>
<dbReference type="InterPro" id="IPR022926">
    <property type="entry name" value="NH(3)-dep_NAD(+)_synth"/>
</dbReference>
<dbReference type="InterPro" id="IPR014729">
    <property type="entry name" value="Rossmann-like_a/b/a_fold"/>
</dbReference>
<dbReference type="NCBIfam" id="TIGR00552">
    <property type="entry name" value="nadE"/>
    <property type="match status" value="1"/>
</dbReference>
<dbReference type="NCBIfam" id="NF001979">
    <property type="entry name" value="PRK00768.1"/>
    <property type="match status" value="1"/>
</dbReference>
<dbReference type="PANTHER" id="PTHR23090">
    <property type="entry name" value="NH 3 /GLUTAMINE-DEPENDENT NAD + SYNTHETASE"/>
    <property type="match status" value="1"/>
</dbReference>
<dbReference type="PANTHER" id="PTHR23090:SF7">
    <property type="entry name" value="NH(3)-DEPENDENT NAD(+) SYNTHETASE"/>
    <property type="match status" value="1"/>
</dbReference>
<dbReference type="Pfam" id="PF02540">
    <property type="entry name" value="NAD_synthase"/>
    <property type="match status" value="1"/>
</dbReference>
<dbReference type="SUPFAM" id="SSF52402">
    <property type="entry name" value="Adenine nucleotide alpha hydrolases-like"/>
    <property type="match status" value="1"/>
</dbReference>
<sequence>MTLQEEIIRQLGVKASIAPQEEIRKTVDFLKAYLRKHSFLKTYVLGISGGQDSTLAGKLAQMAIAELREETSDQAYQFIAVRLPYGVQADEADAQKALAFIMPDQTLTINIKAAVDGQVEALQAAGVEISDFNKGNIKARQRMISQYAIAGQMAGAVIGTDHAAENITGFFTKFGDGGADILPLFRLNKRQGKALLKVLGADAALYEKVPTADLEDQKPGLTDEVALGVTYQDIDDYLEGKLISKVAQATIEKWWHKGQHKRHLPITIFDDFWK</sequence>
<comment type="function">
    <text evidence="1">Catalyzes the ATP-dependent amidation of deamido-NAD to form NAD. Uses ammonia as a nitrogen source.</text>
</comment>
<comment type="catalytic activity">
    <reaction evidence="1">
        <text>deamido-NAD(+) + NH4(+) + ATP = AMP + diphosphate + NAD(+) + H(+)</text>
        <dbReference type="Rhea" id="RHEA:21188"/>
        <dbReference type="ChEBI" id="CHEBI:15378"/>
        <dbReference type="ChEBI" id="CHEBI:28938"/>
        <dbReference type="ChEBI" id="CHEBI:30616"/>
        <dbReference type="ChEBI" id="CHEBI:33019"/>
        <dbReference type="ChEBI" id="CHEBI:57540"/>
        <dbReference type="ChEBI" id="CHEBI:58437"/>
        <dbReference type="ChEBI" id="CHEBI:456215"/>
        <dbReference type="EC" id="6.3.1.5"/>
    </reaction>
</comment>
<comment type="pathway">
    <text evidence="1">Cofactor biosynthesis; NAD(+) biosynthesis; NAD(+) from deamido-NAD(+) (ammonia route): step 1/1.</text>
</comment>
<comment type="subunit">
    <text evidence="1">Homodimer.</text>
</comment>
<comment type="similarity">
    <text evidence="1">Belongs to the NAD synthetase family.</text>
</comment>